<gene>
    <name evidence="1" type="primary">dnaA</name>
    <name type="ordered locus">HI_0993</name>
</gene>
<organism>
    <name type="scientific">Haemophilus influenzae (strain ATCC 51907 / DSM 11121 / KW20 / Rd)</name>
    <dbReference type="NCBI Taxonomy" id="71421"/>
    <lineage>
        <taxon>Bacteria</taxon>
        <taxon>Pseudomonadati</taxon>
        <taxon>Pseudomonadota</taxon>
        <taxon>Gammaproteobacteria</taxon>
        <taxon>Pasteurellales</taxon>
        <taxon>Pasteurellaceae</taxon>
        <taxon>Haemophilus</taxon>
    </lineage>
</organism>
<feature type="chain" id="PRO_0000114186" description="Chromosomal replication initiator protein DnaA">
    <location>
        <begin position="1"/>
        <end position="454"/>
    </location>
</feature>
<feature type="region of interest" description="Domain I, interacts with DnaA modulators" evidence="1">
    <location>
        <begin position="1"/>
        <end position="80"/>
    </location>
</feature>
<feature type="region of interest" description="Domain II" evidence="1">
    <location>
        <begin position="80"/>
        <end position="117"/>
    </location>
</feature>
<feature type="region of interest" description="Domain III, AAA+ region" evidence="1">
    <location>
        <begin position="118"/>
        <end position="335"/>
    </location>
</feature>
<feature type="region of interest" description="Domain IV, binds dsDNA" evidence="1">
    <location>
        <begin position="336"/>
        <end position="454"/>
    </location>
</feature>
<feature type="binding site" evidence="1">
    <location>
        <position position="163"/>
    </location>
    <ligand>
        <name>ATP</name>
        <dbReference type="ChEBI" id="CHEBI:30616"/>
    </ligand>
</feature>
<feature type="binding site" evidence="1">
    <location>
        <position position="165"/>
    </location>
    <ligand>
        <name>ATP</name>
        <dbReference type="ChEBI" id="CHEBI:30616"/>
    </ligand>
</feature>
<feature type="binding site" evidence="1">
    <location>
        <position position="166"/>
    </location>
    <ligand>
        <name>ATP</name>
        <dbReference type="ChEBI" id="CHEBI:30616"/>
    </ligand>
</feature>
<feature type="binding site" evidence="1">
    <location>
        <position position="167"/>
    </location>
    <ligand>
        <name>ATP</name>
        <dbReference type="ChEBI" id="CHEBI:30616"/>
    </ligand>
</feature>
<sequence length="454" mass="51724">MNLSNLWQSCLLQLQDQVSASDLSTWLRPLQADVVADNHIVLYASNMFVKGWVETHYLAQIQQICQTLAQNPELRISLKEGVKPAPKIVESTPNTSLRSESAVDFQAESSASVKFESHLNTKHLFDNFVEGKSNQLARAVGQKLAQAPGEPSANPFFLYGGTGLGKTHLLHAIGNGILADKPNARVLYIHANNFMQHMVKAVRDNKMDQFKKFYRSLDALLVDDIQFFAEKEKTQEEFFHIFNSLFETGRQIILTSDRYPKEIEKIEERLKSRFGWGLTTAIEPPDLETRVAILLKKAEEHNMNLPEEVAFFIAQRLRTNVRELEGALNRVKAMQDFKGGDIDIDFVRDTLKDILALQERLVTIENIQKVVAEYYRIKVSDLKSKSRARSVTRPRQIAMALAKELTNRSLPEIGRAFDRDHTTVLNACREVPKFREQDNSIQEDWANLIRTLSA</sequence>
<proteinExistence type="inferred from homology"/>
<comment type="function">
    <text evidence="1">Plays an essential role in the initiation and regulation of chromosomal replication. ATP-DnaA binds to the origin of replication (oriC) to initiate formation of the DNA replication initiation complex once per cell cycle. Binds the DnaA box (a 9 base pair repeat at the origin) and separates the double-stranded (ds)DNA. Forms a right-handed helical filament on oriC DNA; dsDNA binds to the exterior of the filament while single-stranded (ss)DNA is stabiized in the filament's interior. The ATP-DnaA-oriC complex binds and stabilizes one strand of the AT-rich DNA unwinding element (DUE), permitting loading of DNA polymerase. After initiation quickly degrades to an ADP-DnaA complex that is not apt for DNA replication. Binds acidic phospholipids.</text>
</comment>
<comment type="subunit">
    <text evidence="1">Oligomerizes as a right-handed, spiral filament on DNA at oriC.</text>
</comment>
<comment type="subcellular location">
    <subcellularLocation>
        <location evidence="1">Cytoplasm</location>
    </subcellularLocation>
</comment>
<comment type="domain">
    <text evidence="1">Domain I is involved in oligomerization and binding regulators, domain II is flexibile and of varying length in different bacteria, domain III forms the AAA+ region, while domain IV binds dsDNA.</text>
</comment>
<comment type="similarity">
    <text evidence="1">Belongs to the DnaA family.</text>
</comment>
<evidence type="ECO:0000255" key="1">
    <source>
        <dbReference type="HAMAP-Rule" id="MF_00377"/>
    </source>
</evidence>
<dbReference type="EMBL" id="L42023">
    <property type="protein sequence ID" value="AAC22655.1"/>
    <property type="molecule type" value="Genomic_DNA"/>
</dbReference>
<dbReference type="PIR" id="B64107">
    <property type="entry name" value="B64107"/>
</dbReference>
<dbReference type="RefSeq" id="NP_439156.1">
    <property type="nucleotide sequence ID" value="NC_000907.1"/>
</dbReference>
<dbReference type="SMR" id="P43742"/>
<dbReference type="STRING" id="71421.HI_0993"/>
<dbReference type="EnsemblBacteria" id="AAC22655">
    <property type="protein sequence ID" value="AAC22655"/>
    <property type="gene ID" value="HI_0993"/>
</dbReference>
<dbReference type="KEGG" id="hin:HI_0993"/>
<dbReference type="PATRIC" id="fig|71421.8.peg.1036"/>
<dbReference type="eggNOG" id="COG0593">
    <property type="taxonomic scope" value="Bacteria"/>
</dbReference>
<dbReference type="HOGENOM" id="CLU_026910_0_1_6"/>
<dbReference type="OrthoDB" id="9807019at2"/>
<dbReference type="PhylomeDB" id="P43742"/>
<dbReference type="BioCyc" id="HINF71421:G1GJ1-1035-MONOMER"/>
<dbReference type="Proteomes" id="UP000000579">
    <property type="component" value="Chromosome"/>
</dbReference>
<dbReference type="GO" id="GO:0005737">
    <property type="term" value="C:cytoplasm"/>
    <property type="evidence" value="ECO:0007669"/>
    <property type="project" value="UniProtKB-SubCell"/>
</dbReference>
<dbReference type="GO" id="GO:0005886">
    <property type="term" value="C:plasma membrane"/>
    <property type="evidence" value="ECO:0000318"/>
    <property type="project" value="GO_Central"/>
</dbReference>
<dbReference type="GO" id="GO:0005524">
    <property type="term" value="F:ATP binding"/>
    <property type="evidence" value="ECO:0007669"/>
    <property type="project" value="UniProtKB-UniRule"/>
</dbReference>
<dbReference type="GO" id="GO:0016887">
    <property type="term" value="F:ATP hydrolysis activity"/>
    <property type="evidence" value="ECO:0007669"/>
    <property type="project" value="InterPro"/>
</dbReference>
<dbReference type="GO" id="GO:0003688">
    <property type="term" value="F:DNA replication origin binding"/>
    <property type="evidence" value="ECO:0000318"/>
    <property type="project" value="GO_Central"/>
</dbReference>
<dbReference type="GO" id="GO:0008289">
    <property type="term" value="F:lipid binding"/>
    <property type="evidence" value="ECO:0007669"/>
    <property type="project" value="UniProtKB-KW"/>
</dbReference>
<dbReference type="GO" id="GO:0006260">
    <property type="term" value="P:DNA replication"/>
    <property type="evidence" value="ECO:0000318"/>
    <property type="project" value="GO_Central"/>
</dbReference>
<dbReference type="GO" id="GO:0006270">
    <property type="term" value="P:DNA replication initiation"/>
    <property type="evidence" value="ECO:0000318"/>
    <property type="project" value="GO_Central"/>
</dbReference>
<dbReference type="GO" id="GO:0006275">
    <property type="term" value="P:regulation of DNA replication"/>
    <property type="evidence" value="ECO:0007669"/>
    <property type="project" value="UniProtKB-UniRule"/>
</dbReference>
<dbReference type="CDD" id="cd00009">
    <property type="entry name" value="AAA"/>
    <property type="match status" value="1"/>
</dbReference>
<dbReference type="CDD" id="cd06571">
    <property type="entry name" value="Bac_DnaA_C"/>
    <property type="match status" value="1"/>
</dbReference>
<dbReference type="FunFam" id="1.10.8.60:FF:000003">
    <property type="entry name" value="Chromosomal replication initiator protein DnaA"/>
    <property type="match status" value="1"/>
</dbReference>
<dbReference type="FunFam" id="3.40.50.300:FF:000103">
    <property type="entry name" value="Chromosomal replication initiator protein DnaA"/>
    <property type="match status" value="1"/>
</dbReference>
<dbReference type="Gene3D" id="1.10.1750.10">
    <property type="match status" value="1"/>
</dbReference>
<dbReference type="Gene3D" id="1.10.8.60">
    <property type="match status" value="1"/>
</dbReference>
<dbReference type="Gene3D" id="3.30.300.180">
    <property type="match status" value="1"/>
</dbReference>
<dbReference type="Gene3D" id="3.40.50.300">
    <property type="entry name" value="P-loop containing nucleotide triphosphate hydrolases"/>
    <property type="match status" value="1"/>
</dbReference>
<dbReference type="HAMAP" id="MF_00377">
    <property type="entry name" value="DnaA_bact"/>
    <property type="match status" value="1"/>
</dbReference>
<dbReference type="InterPro" id="IPR003593">
    <property type="entry name" value="AAA+_ATPase"/>
</dbReference>
<dbReference type="InterPro" id="IPR001957">
    <property type="entry name" value="Chromosome_initiator_DnaA"/>
</dbReference>
<dbReference type="InterPro" id="IPR020591">
    <property type="entry name" value="Chromosome_initiator_DnaA-like"/>
</dbReference>
<dbReference type="InterPro" id="IPR018312">
    <property type="entry name" value="Chromosome_initiator_DnaA_CS"/>
</dbReference>
<dbReference type="InterPro" id="IPR013159">
    <property type="entry name" value="DnaA_C"/>
</dbReference>
<dbReference type="InterPro" id="IPR013317">
    <property type="entry name" value="DnaA_dom"/>
</dbReference>
<dbReference type="InterPro" id="IPR024633">
    <property type="entry name" value="DnaA_N_dom"/>
</dbReference>
<dbReference type="InterPro" id="IPR038454">
    <property type="entry name" value="DnaA_N_sf"/>
</dbReference>
<dbReference type="InterPro" id="IPR027417">
    <property type="entry name" value="P-loop_NTPase"/>
</dbReference>
<dbReference type="InterPro" id="IPR010921">
    <property type="entry name" value="Trp_repressor/repl_initiator"/>
</dbReference>
<dbReference type="NCBIfam" id="TIGR00362">
    <property type="entry name" value="DnaA"/>
    <property type="match status" value="1"/>
</dbReference>
<dbReference type="PANTHER" id="PTHR30050">
    <property type="entry name" value="CHROMOSOMAL REPLICATION INITIATOR PROTEIN DNAA"/>
    <property type="match status" value="1"/>
</dbReference>
<dbReference type="PANTHER" id="PTHR30050:SF2">
    <property type="entry name" value="CHROMOSOMAL REPLICATION INITIATOR PROTEIN DNAA"/>
    <property type="match status" value="1"/>
</dbReference>
<dbReference type="Pfam" id="PF00308">
    <property type="entry name" value="Bac_DnaA"/>
    <property type="match status" value="1"/>
</dbReference>
<dbReference type="Pfam" id="PF08299">
    <property type="entry name" value="Bac_DnaA_C"/>
    <property type="match status" value="1"/>
</dbReference>
<dbReference type="Pfam" id="PF11638">
    <property type="entry name" value="DnaA_N"/>
    <property type="match status" value="1"/>
</dbReference>
<dbReference type="PRINTS" id="PR00051">
    <property type="entry name" value="DNAA"/>
</dbReference>
<dbReference type="SMART" id="SM00382">
    <property type="entry name" value="AAA"/>
    <property type="match status" value="1"/>
</dbReference>
<dbReference type="SMART" id="SM00760">
    <property type="entry name" value="Bac_DnaA_C"/>
    <property type="match status" value="1"/>
</dbReference>
<dbReference type="SUPFAM" id="SSF52540">
    <property type="entry name" value="P-loop containing nucleoside triphosphate hydrolases"/>
    <property type="match status" value="1"/>
</dbReference>
<dbReference type="SUPFAM" id="SSF48295">
    <property type="entry name" value="TrpR-like"/>
    <property type="match status" value="1"/>
</dbReference>
<dbReference type="PROSITE" id="PS01008">
    <property type="entry name" value="DNAA"/>
    <property type="match status" value="1"/>
</dbReference>
<keyword id="KW-0067">ATP-binding</keyword>
<keyword id="KW-0963">Cytoplasm</keyword>
<keyword id="KW-0235">DNA replication</keyword>
<keyword id="KW-0238">DNA-binding</keyword>
<keyword id="KW-0446">Lipid-binding</keyword>
<keyword id="KW-0547">Nucleotide-binding</keyword>
<keyword id="KW-1185">Reference proteome</keyword>
<protein>
    <recommendedName>
        <fullName evidence="1">Chromosomal replication initiator protein DnaA</fullName>
    </recommendedName>
</protein>
<accession>P43742</accession>
<name>DNAA_HAEIN</name>
<reference key="1">
    <citation type="journal article" date="1995" name="Science">
        <title>Whole-genome random sequencing and assembly of Haemophilus influenzae Rd.</title>
        <authorList>
            <person name="Fleischmann R.D."/>
            <person name="Adams M.D."/>
            <person name="White O."/>
            <person name="Clayton R.A."/>
            <person name="Kirkness E.F."/>
            <person name="Kerlavage A.R."/>
            <person name="Bult C.J."/>
            <person name="Tomb J.-F."/>
            <person name="Dougherty B.A."/>
            <person name="Merrick J.M."/>
            <person name="McKenney K."/>
            <person name="Sutton G.G."/>
            <person name="FitzHugh W."/>
            <person name="Fields C.A."/>
            <person name="Gocayne J.D."/>
            <person name="Scott J.D."/>
            <person name="Shirley R."/>
            <person name="Liu L.-I."/>
            <person name="Glodek A."/>
            <person name="Kelley J.M."/>
            <person name="Weidman J.F."/>
            <person name="Phillips C.A."/>
            <person name="Spriggs T."/>
            <person name="Hedblom E."/>
            <person name="Cotton M.D."/>
            <person name="Utterback T.R."/>
            <person name="Hanna M.C."/>
            <person name="Nguyen D.T."/>
            <person name="Saudek D.M."/>
            <person name="Brandon R.C."/>
            <person name="Fine L.D."/>
            <person name="Fritchman J.L."/>
            <person name="Fuhrmann J.L."/>
            <person name="Geoghagen N.S.M."/>
            <person name="Gnehm C.L."/>
            <person name="McDonald L.A."/>
            <person name="Small K.V."/>
            <person name="Fraser C.M."/>
            <person name="Smith H.O."/>
            <person name="Venter J.C."/>
        </authorList>
    </citation>
    <scope>NUCLEOTIDE SEQUENCE [LARGE SCALE GENOMIC DNA]</scope>
    <source>
        <strain>ATCC 51907 / DSM 11121 / KW20 / Rd</strain>
    </source>
</reference>